<name>GLYC_TACVT</name>
<gene>
    <name evidence="2" type="primary">GPC</name>
    <name type="synonym">GP-C</name>
</gene>
<organismHost>
    <name type="scientific">Artibeus</name>
    <name type="common">neotropical fruit bats</name>
    <dbReference type="NCBI Taxonomy" id="9416"/>
</organismHost>
<comment type="function">
    <molecule>Glycoprotein G2</molecule>
    <text evidence="2">Class I viral fusion protein that directs fusion of viral and host endosomal membranes, leading to delivery of the nucleocapsid into the cytoplasm. Membrane fusion is mediated by irreversible conformational changes induced upon acidification in the endosome.</text>
</comment>
<comment type="function">
    <text evidence="2">Stable signal peptide (SSP): cleaved and functions as a signal peptide. In addition, it is also retained as the third component of the GP complex. The SSP is required for efficient glycoprotein expression, post-translational maturation cleavage of GP1 and GP2, glycoprotein transport to the cell surface plasma membrane, formation of infectious virus particles, and acid pH-dependent glycoprotein-mediated cell fusion.</text>
</comment>
<comment type="function">
    <molecule>Glycoprotein G1</molecule>
    <text evidence="2">Interacts with the host receptor.</text>
</comment>
<comment type="subunit">
    <molecule>Glycoprotein G1</molecule>
    <text evidence="2">Homotetramer; disulfide-linked.</text>
</comment>
<comment type="subunit">
    <molecule>Glycoprotein G2</molecule>
    <text evidence="2">Homotetramer. GP2 homotetramers bind through ionic interactions with GP1 homotetramers to form the GP complex together with the stable signal peptide. The GP-C polyprotein interacts with the host protease MBTPS1/SKI-1 resulting in the polyprotein processing.</text>
</comment>
<comment type="subcellular location">
    <molecule>Glycoprotein G1</molecule>
    <subcellularLocation>
        <location evidence="2">Virion membrane</location>
        <topology evidence="2">Peripheral membrane protein</topology>
    </subcellularLocation>
    <subcellularLocation>
        <location evidence="2">Host endoplasmic reticulum membrane</location>
        <topology evidence="2">Peripheral membrane protein</topology>
    </subcellularLocation>
    <subcellularLocation>
        <location evidence="2">Host Golgi apparatus membrane</location>
        <topology evidence="2">Peripheral membrane protein</topology>
    </subcellularLocation>
    <subcellularLocation>
        <location evidence="2">Host cell membrane</location>
        <topology evidence="2">Peripheral membrane protein</topology>
    </subcellularLocation>
</comment>
<comment type="subcellular location">
    <molecule>Glycoprotein G2</molecule>
    <subcellularLocation>
        <location evidence="2">Virion membrane</location>
        <topology evidence="2">Single-pass membrane protein</topology>
    </subcellularLocation>
    <subcellularLocation>
        <location evidence="2">Host endoplasmic reticulum membrane</location>
        <topology evidence="2">Single-pass membrane protein</topology>
    </subcellularLocation>
    <subcellularLocation>
        <location evidence="2">Host Golgi apparatus membrane</location>
        <topology evidence="2">Single-pass membrane protein</topology>
    </subcellularLocation>
    <subcellularLocation>
        <location evidence="2">Host cell membrane</location>
        <topology evidence="2">Single-pass membrane protein</topology>
    </subcellularLocation>
    <text evidence="2">Binding to the stable signal peptide masks endogenous ER localization signals in the cytoplasmic domain of G2 to ensure that only the fully assembled, tripartite GP complex is transported for virion assembly.</text>
</comment>
<comment type="subcellular location">
    <molecule>Stable signal peptide</molecule>
    <subcellularLocation>
        <location evidence="2">Virion membrane</location>
        <topology evidence="2">Multi-pass membrane protein</topology>
    </subcellularLocation>
    <subcellularLocation>
        <location evidence="2">Host endoplasmic reticulum membrane</location>
        <topology evidence="2">Multi-pass membrane protein</topology>
    </subcellularLocation>
    <subcellularLocation>
        <location evidence="2">Host Golgi apparatus membrane</location>
        <topology evidence="2">Multi-pass membrane protein</topology>
    </subcellularLocation>
    <subcellularLocation>
        <location evidence="2">Host cell membrane</location>
        <topology evidence="2">Multi-pass membrane protein</topology>
    </subcellularLocation>
</comment>
<comment type="domain">
    <text evidence="2">The cytoplasmic domain of GP2 plays a role in ER location. It also contains a zinc-binding domain that allows SSP retention in the GPC complex by accepting a cysteine from SSP as the fourth ligand.</text>
</comment>
<comment type="PTM">
    <text evidence="2">Specific enzymatic cleavages in vivo yield mature proteins. GP-C polyprotein is cleaved in the endoplasmic reticulum by the host protease MBTPS1. Only cleaved glycoprotein is incorporated into virions.</text>
</comment>
<comment type="PTM">
    <text evidence="2">The SSP remains stably associated with the GP complex following cleavage by signal peptidase and plays crucial roles in the trafficking of GP through the secretory pathway.</text>
</comment>
<comment type="PTM">
    <molecule>Stable signal peptide</molecule>
    <text evidence="2">Myristoylation is necessary for GP2-mediated fusion activity.</text>
</comment>
<comment type="similarity">
    <text evidence="2">Belongs to the arenaviridae GPC protein family.</text>
</comment>
<protein>
    <recommendedName>
        <fullName evidence="2">Pre-glycoprotein polyprotein GP complex</fullName>
        <shortName evidence="2">Pre-GP-C</shortName>
    </recommendedName>
    <component>
        <recommendedName>
            <fullName evidence="2">Stable signal peptide</fullName>
            <shortName evidence="2">SSP</shortName>
        </recommendedName>
    </component>
    <component>
        <recommendedName>
            <fullName evidence="2">Glycoprotein G1</fullName>
            <shortName evidence="2">GP1</shortName>
        </recommendedName>
    </component>
    <component>
        <recommendedName>
            <fullName evidence="2">Glycoprotein G2</fullName>
            <shortName evidence="2">GP2</shortName>
        </recommendedName>
    </component>
</protein>
<organism>
    <name type="scientific">Tacaribe virus (strain TRVL 11598)</name>
    <name type="common">TCRV</name>
    <dbReference type="NCBI Taxonomy" id="31614"/>
    <lineage>
        <taxon>Viruses</taxon>
        <taxon>Riboviria</taxon>
        <taxon>Orthornavirae</taxon>
        <taxon>Negarnaviricota</taxon>
        <taxon>Polyploviricotina</taxon>
        <taxon>Ellioviricetes</taxon>
        <taxon>Bunyavirales</taxon>
        <taxon>Arenaviridae</taxon>
        <taxon>Mammarenavirus</taxon>
        <taxon>Tacaribe virus</taxon>
    </lineage>
</organism>
<evidence type="ECO:0000250" key="1">
    <source>
        <dbReference type="UniProtKB" id="P26313"/>
    </source>
</evidence>
<evidence type="ECO:0000255" key="2">
    <source>
        <dbReference type="HAMAP-Rule" id="MF_04084"/>
    </source>
</evidence>
<accession>P31840</accession>
<keyword id="KW-1015">Disulfide bond</keyword>
<keyword id="KW-1170">Fusion of virus membrane with host endosomal membrane</keyword>
<keyword id="KW-1168">Fusion of virus membrane with host membrane</keyword>
<keyword id="KW-0325">Glycoprotein</keyword>
<keyword id="KW-1032">Host cell membrane</keyword>
<keyword id="KW-1038">Host endoplasmic reticulum</keyword>
<keyword id="KW-1040">Host Golgi apparatus</keyword>
<keyword id="KW-1043">Host membrane</keyword>
<keyword id="KW-0945">Host-virus interaction</keyword>
<keyword id="KW-0449">Lipoprotein</keyword>
<keyword id="KW-0472">Membrane</keyword>
<keyword id="KW-0479">Metal-binding</keyword>
<keyword id="KW-0519">Myristate</keyword>
<keyword id="KW-0812">Transmembrane</keyword>
<keyword id="KW-1133">Transmembrane helix</keyword>
<keyword id="KW-1161">Viral attachment to host cell</keyword>
<keyword id="KW-0261">Viral envelope protein</keyword>
<keyword id="KW-1162">Viral penetration into host cytoplasm</keyword>
<keyword id="KW-0946">Virion</keyword>
<keyword id="KW-1164">Virus endocytosis by host</keyword>
<keyword id="KW-1160">Virus entry into host cell</keyword>
<keyword id="KW-0862">Zinc</keyword>
<proteinExistence type="inferred from homology"/>
<sequence>MGQFISFMQEIPIFLQEALNIALVAVSLICIVKGLVNLYRCGLFQLMVFLVLAGRSCSEETFKIGMHTQFQEVSLSLSALLTNQSHELPMLCLANKTHLYLKSGRSSFKINIDSVTVLTRSADVFVHSPKLGSCFESDEEWVVAWWIEAIGHRWDQDPGLLCRNKTKTEGKLIQINISRADGNVHYGWRLKNGLDHIYRGREEPCFEGEQCLIKIQPEDWPTDCKADHTNTFRFLSRSQKSIAVGRTLKAFFSWSLTDPLGNEAPGGYCLEKWMLVASELKCFGNTAIAKCNQNHDSEFCDMLRLFDYNKNAIKTLNEETKTRVNVLSHTINALISDNLLMKNKIRELMSVPYCNYTRFWYVNHTLSGQHSLPRCWMIRNNSYLNSSEFRNEWILESDFLISEMLSKEYSERQGRTPITLVDICFWSTVFFTSTLFLHLIGFPTHEHIRGEGCPLPHRLNSMGGCRCGKYLPLKKPTIWHRRH</sequence>
<feature type="initiator methionine" description="Removed; by host" evidence="2">
    <location>
        <position position="1"/>
    </location>
</feature>
<feature type="chain" id="PRO_0000353870" description="Pre-glycoprotein polyprotein GP complex" evidence="2">
    <location>
        <begin position="2"/>
        <end position="483"/>
    </location>
</feature>
<feature type="chain" id="PRO_0000353871" description="Stable signal peptide" evidence="2">
    <location>
        <begin position="2"/>
        <end position="58"/>
    </location>
</feature>
<feature type="chain" id="PRO_0000036617" description="Glycoprotein G1" evidence="2">
    <location>
        <begin position="59"/>
        <end position="249"/>
    </location>
</feature>
<feature type="chain" id="PRO_0000036618" description="Glycoprotein G2" evidence="2">
    <location>
        <begin position="250"/>
        <end position="483"/>
    </location>
</feature>
<feature type="topological domain" description="Extracellular" evidence="2">
    <location>
        <begin position="2"/>
        <end position="17"/>
    </location>
</feature>
<feature type="transmembrane region" description="Helical" evidence="2">
    <location>
        <begin position="18"/>
        <end position="32"/>
    </location>
</feature>
<feature type="topological domain" description="Cytoplasmic" evidence="2">
    <location>
        <position position="33"/>
    </location>
</feature>
<feature type="transmembrane region" description="Helical" evidence="2">
    <location>
        <begin position="34"/>
        <end position="53"/>
    </location>
</feature>
<feature type="topological domain" description="Extracellular" evidence="2">
    <location>
        <begin position="54"/>
        <end position="58"/>
    </location>
</feature>
<feature type="topological domain" description="Extracellular" evidence="2">
    <location>
        <begin position="59"/>
        <end position="422"/>
    </location>
</feature>
<feature type="transmembrane region" description="Helical" evidence="2">
    <location>
        <begin position="423"/>
        <end position="443"/>
    </location>
</feature>
<feature type="topological domain" description="Cytoplasmic" evidence="2">
    <location>
        <begin position="444"/>
        <end position="483"/>
    </location>
</feature>
<feature type="binding site" evidence="2">
    <location>
        <position position="57"/>
    </location>
    <ligand>
        <name>Zn(2+)</name>
        <dbReference type="ChEBI" id="CHEBI:29105"/>
        <label>1</label>
    </ligand>
</feature>
<feature type="binding site" evidence="2">
    <location>
        <position position="445"/>
    </location>
    <ligand>
        <name>Zn(2+)</name>
        <dbReference type="ChEBI" id="CHEBI:29105"/>
        <label>2</label>
    </ligand>
</feature>
<feature type="binding site" evidence="2">
    <location>
        <position position="447"/>
    </location>
    <ligand>
        <name>Zn(2+)</name>
        <dbReference type="ChEBI" id="CHEBI:29105"/>
        <label>2</label>
    </ligand>
</feature>
<feature type="binding site" evidence="2">
    <location>
        <position position="453"/>
    </location>
    <ligand>
        <name>Zn(2+)</name>
        <dbReference type="ChEBI" id="CHEBI:29105"/>
        <label>2</label>
    </ligand>
</feature>
<feature type="binding site" evidence="2">
    <location>
        <position position="457"/>
    </location>
    <ligand>
        <name>Zn(2+)</name>
        <dbReference type="ChEBI" id="CHEBI:29105"/>
        <label>1</label>
    </ligand>
</feature>
<feature type="binding site" evidence="2">
    <location>
        <position position="465"/>
    </location>
    <ligand>
        <name>Zn(2+)</name>
        <dbReference type="ChEBI" id="CHEBI:29105"/>
        <label>1</label>
    </ligand>
</feature>
<feature type="binding site" evidence="2">
    <location>
        <position position="467"/>
    </location>
    <ligand>
        <name>Zn(2+)</name>
        <dbReference type="ChEBI" id="CHEBI:29105"/>
        <label>1</label>
    </ligand>
</feature>
<feature type="binding site" evidence="2">
    <location>
        <position position="483"/>
    </location>
    <ligand>
        <name>Zn(2+)</name>
        <dbReference type="ChEBI" id="CHEBI:29105"/>
        <label>2</label>
    </ligand>
</feature>
<feature type="site" description="Important for GP-C-mediated membrane fusion" evidence="1">
    <location>
        <position position="33"/>
    </location>
</feature>
<feature type="site" description="Cleavage; by host signal peptidase" evidence="2">
    <location>
        <begin position="58"/>
        <end position="59"/>
    </location>
</feature>
<feature type="site" description="Cleavage; by host MBTPS1" evidence="2">
    <location>
        <begin position="249"/>
        <end position="250"/>
    </location>
</feature>
<feature type="lipid moiety-binding region" description="N-myristoyl glycine; by host" evidence="2">
    <location>
        <position position="2"/>
    </location>
</feature>
<feature type="glycosylation site" description="N-linked (GlcNAc...) asparagine; by host" evidence="2">
    <location>
        <position position="83"/>
    </location>
</feature>
<feature type="glycosylation site" description="N-linked (GlcNAc...) asparagine; by host" evidence="2">
    <location>
        <position position="95"/>
    </location>
</feature>
<feature type="glycosylation site" description="N-linked (GlcNAc...) asparagine; by host" evidence="2">
    <location>
        <position position="164"/>
    </location>
</feature>
<feature type="glycosylation site" description="N-linked (GlcNAc...) asparagine; by host" evidence="2">
    <location>
        <position position="176"/>
    </location>
</feature>
<feature type="glycosylation site" description="N-linked (GlcNAc...) asparagine; by host" evidence="2">
    <location>
        <position position="355"/>
    </location>
</feature>
<feature type="glycosylation site" description="N-linked (GlcNAc...) asparagine; by host" evidence="2">
    <location>
        <position position="363"/>
    </location>
</feature>
<feature type="glycosylation site" description="N-linked (GlcNAc...) asparagine; by host" evidence="2">
    <location>
        <position position="380"/>
    </location>
</feature>
<feature type="glycosylation site" description="N-linked (GlcNAc...) asparagine; by host" evidence="2">
    <location>
        <position position="385"/>
    </location>
</feature>
<feature type="disulfide bond" evidence="2">
    <location>
        <begin position="92"/>
        <end position="224"/>
    </location>
</feature>
<feature type="disulfide bond" evidence="2">
    <location>
        <begin position="134"/>
        <end position="162"/>
    </location>
</feature>
<feature type="disulfide bond" evidence="2">
    <location>
        <begin position="205"/>
        <end position="211"/>
    </location>
</feature>
<feature type="disulfide bond" evidence="2">
    <location>
        <begin position="269"/>
        <end position="282"/>
    </location>
</feature>
<feature type="disulfide bond" evidence="2">
    <location>
        <begin position="291"/>
        <end position="300"/>
    </location>
</feature>
<feature type="disulfide bond" evidence="2">
    <location>
        <begin position="354"/>
        <end position="375"/>
    </location>
</feature>
<dbReference type="PIR" id="JQ1453">
    <property type="entry name" value="VGXPTV"/>
</dbReference>
<dbReference type="SMR" id="P31840"/>
<dbReference type="GlyCosmos" id="P31840">
    <property type="glycosylation" value="8 sites, No reported glycans"/>
</dbReference>
<dbReference type="GO" id="GO:0044167">
    <property type="term" value="C:host cell endoplasmic reticulum membrane"/>
    <property type="evidence" value="ECO:0007669"/>
    <property type="project" value="UniProtKB-SubCell"/>
</dbReference>
<dbReference type="GO" id="GO:0044178">
    <property type="term" value="C:host cell Golgi membrane"/>
    <property type="evidence" value="ECO:0007669"/>
    <property type="project" value="UniProtKB-SubCell"/>
</dbReference>
<dbReference type="GO" id="GO:0020002">
    <property type="term" value="C:host cell plasma membrane"/>
    <property type="evidence" value="ECO:0007669"/>
    <property type="project" value="UniProtKB-SubCell"/>
</dbReference>
<dbReference type="GO" id="GO:0016020">
    <property type="term" value="C:membrane"/>
    <property type="evidence" value="ECO:0007669"/>
    <property type="project" value="UniProtKB-UniRule"/>
</dbReference>
<dbReference type="GO" id="GO:0019031">
    <property type="term" value="C:viral envelope"/>
    <property type="evidence" value="ECO:0007669"/>
    <property type="project" value="UniProtKB-UniRule"/>
</dbReference>
<dbReference type="GO" id="GO:0055036">
    <property type="term" value="C:virion membrane"/>
    <property type="evidence" value="ECO:0007669"/>
    <property type="project" value="UniProtKB-SubCell"/>
</dbReference>
<dbReference type="GO" id="GO:0046872">
    <property type="term" value="F:metal ion binding"/>
    <property type="evidence" value="ECO:0007669"/>
    <property type="project" value="UniProtKB-KW"/>
</dbReference>
<dbReference type="GO" id="GO:0039654">
    <property type="term" value="P:fusion of virus membrane with host endosome membrane"/>
    <property type="evidence" value="ECO:0007669"/>
    <property type="project" value="UniProtKB-UniRule"/>
</dbReference>
<dbReference type="GO" id="GO:0019065">
    <property type="term" value="P:receptor-mediated endocytosis of virus by host cell"/>
    <property type="evidence" value="ECO:0007669"/>
    <property type="project" value="UniProtKB-UniRule"/>
</dbReference>
<dbReference type="GO" id="GO:0019062">
    <property type="term" value="P:virion attachment to host cell"/>
    <property type="evidence" value="ECO:0007669"/>
    <property type="project" value="UniProtKB-UniRule"/>
</dbReference>
<dbReference type="Gene3D" id="6.10.140.1590">
    <property type="match status" value="1"/>
</dbReference>
<dbReference type="Gene3D" id="2.20.28.180">
    <property type="entry name" value="Arenavirus glycoprotein, zinc binding domain"/>
    <property type="match status" value="1"/>
</dbReference>
<dbReference type="HAMAP" id="MF_04084">
    <property type="entry name" value="ARENA_GPC"/>
    <property type="match status" value="1"/>
</dbReference>
<dbReference type="InterPro" id="IPR001535">
    <property type="entry name" value="Arena_glycoprot"/>
</dbReference>
<dbReference type="InterPro" id="IPR043015">
    <property type="entry name" value="Arena_glycoprot_zinc-bd"/>
</dbReference>
<dbReference type="Pfam" id="PF00798">
    <property type="entry name" value="Arena_glycoprot"/>
    <property type="match status" value="1"/>
</dbReference>
<dbReference type="PIRSF" id="PIRSF004028">
    <property type="entry name" value="GPC_ArenaV"/>
    <property type="match status" value="1"/>
</dbReference>
<reference key="1">
    <citation type="journal article" date="1991" name="J. Gen. Virol.">
        <title>Analysis of the glycoprotein gene of Tacaribe virus and neutralization-resistant variants.</title>
        <authorList>
            <person name="Allison L.M.C."/>
            <person name="Salter M.W.A.P."/>
            <person name="Kiguwa S."/>
            <person name="Howard C.R."/>
        </authorList>
    </citation>
    <scope>NUCLEOTIDE SEQUENCE [GENOMIC RNA]</scope>
</reference>